<accession>Q8C1F5</accession>
<organism>
    <name type="scientific">Mus musculus</name>
    <name type="common">Mouse</name>
    <dbReference type="NCBI Taxonomy" id="10090"/>
    <lineage>
        <taxon>Eukaryota</taxon>
        <taxon>Metazoa</taxon>
        <taxon>Chordata</taxon>
        <taxon>Craniata</taxon>
        <taxon>Vertebrata</taxon>
        <taxon>Euteleostomi</taxon>
        <taxon>Mammalia</taxon>
        <taxon>Eutheria</taxon>
        <taxon>Euarchontoglires</taxon>
        <taxon>Glires</taxon>
        <taxon>Rodentia</taxon>
        <taxon>Myomorpha</taxon>
        <taxon>Muroidea</taxon>
        <taxon>Muridae</taxon>
        <taxon>Murinae</taxon>
        <taxon>Mus</taxon>
        <taxon>Mus</taxon>
    </lineage>
</organism>
<reference key="1">
    <citation type="journal article" date="2005" name="Science">
        <title>The transcriptional landscape of the mammalian genome.</title>
        <authorList>
            <person name="Carninci P."/>
            <person name="Kasukawa T."/>
            <person name="Katayama S."/>
            <person name="Gough J."/>
            <person name="Frith M.C."/>
            <person name="Maeda N."/>
            <person name="Oyama R."/>
            <person name="Ravasi T."/>
            <person name="Lenhard B."/>
            <person name="Wells C."/>
            <person name="Kodzius R."/>
            <person name="Shimokawa K."/>
            <person name="Bajic V.B."/>
            <person name="Brenner S.E."/>
            <person name="Batalov S."/>
            <person name="Forrest A.R."/>
            <person name="Zavolan M."/>
            <person name="Davis M.J."/>
            <person name="Wilming L.G."/>
            <person name="Aidinis V."/>
            <person name="Allen J.E."/>
            <person name="Ambesi-Impiombato A."/>
            <person name="Apweiler R."/>
            <person name="Aturaliya R.N."/>
            <person name="Bailey T.L."/>
            <person name="Bansal M."/>
            <person name="Baxter L."/>
            <person name="Beisel K.W."/>
            <person name="Bersano T."/>
            <person name="Bono H."/>
            <person name="Chalk A.M."/>
            <person name="Chiu K.P."/>
            <person name="Choudhary V."/>
            <person name="Christoffels A."/>
            <person name="Clutterbuck D.R."/>
            <person name="Crowe M.L."/>
            <person name="Dalla E."/>
            <person name="Dalrymple B.P."/>
            <person name="de Bono B."/>
            <person name="Della Gatta G."/>
            <person name="di Bernardo D."/>
            <person name="Down T."/>
            <person name="Engstrom P."/>
            <person name="Fagiolini M."/>
            <person name="Faulkner G."/>
            <person name="Fletcher C.F."/>
            <person name="Fukushima T."/>
            <person name="Furuno M."/>
            <person name="Futaki S."/>
            <person name="Gariboldi M."/>
            <person name="Georgii-Hemming P."/>
            <person name="Gingeras T.R."/>
            <person name="Gojobori T."/>
            <person name="Green R.E."/>
            <person name="Gustincich S."/>
            <person name="Harbers M."/>
            <person name="Hayashi Y."/>
            <person name="Hensch T.K."/>
            <person name="Hirokawa N."/>
            <person name="Hill D."/>
            <person name="Huminiecki L."/>
            <person name="Iacono M."/>
            <person name="Ikeo K."/>
            <person name="Iwama A."/>
            <person name="Ishikawa T."/>
            <person name="Jakt M."/>
            <person name="Kanapin A."/>
            <person name="Katoh M."/>
            <person name="Kawasawa Y."/>
            <person name="Kelso J."/>
            <person name="Kitamura H."/>
            <person name="Kitano H."/>
            <person name="Kollias G."/>
            <person name="Krishnan S.P."/>
            <person name="Kruger A."/>
            <person name="Kummerfeld S.K."/>
            <person name="Kurochkin I.V."/>
            <person name="Lareau L.F."/>
            <person name="Lazarevic D."/>
            <person name="Lipovich L."/>
            <person name="Liu J."/>
            <person name="Liuni S."/>
            <person name="McWilliam S."/>
            <person name="Madan Babu M."/>
            <person name="Madera M."/>
            <person name="Marchionni L."/>
            <person name="Matsuda H."/>
            <person name="Matsuzawa S."/>
            <person name="Miki H."/>
            <person name="Mignone F."/>
            <person name="Miyake S."/>
            <person name="Morris K."/>
            <person name="Mottagui-Tabar S."/>
            <person name="Mulder N."/>
            <person name="Nakano N."/>
            <person name="Nakauchi H."/>
            <person name="Ng P."/>
            <person name="Nilsson R."/>
            <person name="Nishiguchi S."/>
            <person name="Nishikawa S."/>
            <person name="Nori F."/>
            <person name="Ohara O."/>
            <person name="Okazaki Y."/>
            <person name="Orlando V."/>
            <person name="Pang K.C."/>
            <person name="Pavan W.J."/>
            <person name="Pavesi G."/>
            <person name="Pesole G."/>
            <person name="Petrovsky N."/>
            <person name="Piazza S."/>
            <person name="Reed J."/>
            <person name="Reid J.F."/>
            <person name="Ring B.Z."/>
            <person name="Ringwald M."/>
            <person name="Rost B."/>
            <person name="Ruan Y."/>
            <person name="Salzberg S.L."/>
            <person name="Sandelin A."/>
            <person name="Schneider C."/>
            <person name="Schoenbach C."/>
            <person name="Sekiguchi K."/>
            <person name="Semple C.A."/>
            <person name="Seno S."/>
            <person name="Sessa L."/>
            <person name="Sheng Y."/>
            <person name="Shibata Y."/>
            <person name="Shimada H."/>
            <person name="Shimada K."/>
            <person name="Silva D."/>
            <person name="Sinclair B."/>
            <person name="Sperling S."/>
            <person name="Stupka E."/>
            <person name="Sugiura K."/>
            <person name="Sultana R."/>
            <person name="Takenaka Y."/>
            <person name="Taki K."/>
            <person name="Tammoja K."/>
            <person name="Tan S.L."/>
            <person name="Tang S."/>
            <person name="Taylor M.S."/>
            <person name="Tegner J."/>
            <person name="Teichmann S.A."/>
            <person name="Ueda H.R."/>
            <person name="van Nimwegen E."/>
            <person name="Verardo R."/>
            <person name="Wei C.L."/>
            <person name="Yagi K."/>
            <person name="Yamanishi H."/>
            <person name="Zabarovsky E."/>
            <person name="Zhu S."/>
            <person name="Zimmer A."/>
            <person name="Hide W."/>
            <person name="Bult C."/>
            <person name="Grimmond S.M."/>
            <person name="Teasdale R.D."/>
            <person name="Liu E.T."/>
            <person name="Brusic V."/>
            <person name="Quackenbush J."/>
            <person name="Wahlestedt C."/>
            <person name="Mattick J.S."/>
            <person name="Hume D.A."/>
            <person name="Kai C."/>
            <person name="Sasaki D."/>
            <person name="Tomaru Y."/>
            <person name="Fukuda S."/>
            <person name="Kanamori-Katayama M."/>
            <person name="Suzuki M."/>
            <person name="Aoki J."/>
            <person name="Arakawa T."/>
            <person name="Iida J."/>
            <person name="Imamura K."/>
            <person name="Itoh M."/>
            <person name="Kato T."/>
            <person name="Kawaji H."/>
            <person name="Kawagashira N."/>
            <person name="Kawashima T."/>
            <person name="Kojima M."/>
            <person name="Kondo S."/>
            <person name="Konno H."/>
            <person name="Nakano K."/>
            <person name="Ninomiya N."/>
            <person name="Nishio T."/>
            <person name="Okada M."/>
            <person name="Plessy C."/>
            <person name="Shibata K."/>
            <person name="Shiraki T."/>
            <person name="Suzuki S."/>
            <person name="Tagami M."/>
            <person name="Waki K."/>
            <person name="Watahiki A."/>
            <person name="Okamura-Oho Y."/>
            <person name="Suzuki H."/>
            <person name="Kawai J."/>
            <person name="Hayashizaki Y."/>
        </authorList>
    </citation>
    <scope>NUCLEOTIDE SEQUENCE [LARGE SCALE MRNA]</scope>
    <source>
        <strain>C57BL/6J</strain>
        <tissue>Lung</tissue>
    </source>
</reference>
<gene>
    <name type="primary">Ttc16</name>
</gene>
<sequence length="767" mass="86945">MTDPTKRRMIGSTVPAKVREYYNQGHQCLLQEDWEMSVLFFSRALHLDPKLVDFYVFRAEAFIQLCDFSSALQNLRRAYSYDPGNNKYLNRLAFVLYLQGQCLYELCDFQEALCVFLQASDLQPQNASFSYRCMACLLALKRYHDCLALITREVKQGRASADVYILRARLYNFFQKAKLCYQDLRSALLLDPLHAQAKGLLQKMVDQAKQSLQDASTLAVQGKVHRALKCINCAIENNPLDPNFFFFRGTLRRRLQQFDHAVEDFLKAMDMVTDTQDNLVKQAQRQLLLTYNDFAVHCYNHGAYQEGVLLLNKAIRDEQNEKGLYINRGDCFFQLGNLAFAEADYKQALALSPLDEGANLRMGVLQEKLGFCQQKHRQFQTAEEHFSEAIRHSPQKPQYYLHRAKCRQFLQNTLGARLDVATVLLVNPEYPKMAAVMNTLFPSMTVENVLKSQVAELAKLQLSRMIENGPKNIYPQSTVVQRLLERRKAQVLVKLWKQERLGTPEEEVTLYQAPQLAEEKKVKTARRRTSLTDSYADQTSSGSVFSIVSISTSGPEMSTSQEYKSSSHTAIEFSESTLLKPQLSVPRKSQELTWSPKVVQAVTENLIQNATEVTPAYGQRDSKKATQVPKPKKTEDPKDPSQSTSTTEAPEGPRPSKSRSTLSVKERIRRAKAVRAQGWKLKAQRSSQKVTKTPSLTHSTTHSDIGESANDTPGQTPWPSKAADSLSFSEISSTDLSSSESFLELTNLLTQEVQQIPGDREKLTSDD</sequence>
<keyword id="KW-1185">Reference proteome</keyword>
<keyword id="KW-0677">Repeat</keyword>
<keyword id="KW-0802">TPR repeat</keyword>
<protein>
    <recommendedName>
        <fullName>Tetratricopeptide repeat protein 16</fullName>
        <shortName>TPR repeat protein 16</shortName>
    </recommendedName>
</protein>
<evidence type="ECO:0000256" key="1">
    <source>
        <dbReference type="SAM" id="MobiDB-lite"/>
    </source>
</evidence>
<proteinExistence type="evidence at transcript level"/>
<feature type="chain" id="PRO_0000106405" description="Tetratricopeptide repeat protein 16">
    <location>
        <begin position="1"/>
        <end position="767"/>
    </location>
</feature>
<feature type="repeat" description="TPR 1">
    <location>
        <begin position="18"/>
        <end position="51"/>
    </location>
</feature>
<feature type="repeat" description="TPR 2">
    <location>
        <begin position="53"/>
        <end position="85"/>
    </location>
</feature>
<feature type="repeat" description="TPR 3">
    <location>
        <begin position="93"/>
        <end position="126"/>
    </location>
</feature>
<feature type="repeat" description="TPR 4">
    <location>
        <begin position="128"/>
        <end position="155"/>
    </location>
</feature>
<feature type="repeat" description="TPR 5">
    <location>
        <begin position="208"/>
        <end position="241"/>
    </location>
</feature>
<feature type="repeat" description="TPR 6">
    <location>
        <begin position="242"/>
        <end position="275"/>
    </location>
</feature>
<feature type="repeat" description="TPR 7">
    <location>
        <begin position="288"/>
        <end position="321"/>
    </location>
</feature>
<feature type="repeat" description="TPR 8">
    <location>
        <begin position="322"/>
        <end position="355"/>
    </location>
</feature>
<feature type="repeat" description="TPR 9">
    <location>
        <begin position="363"/>
        <end position="396"/>
    </location>
</feature>
<feature type="region of interest" description="Disordered" evidence="1">
    <location>
        <begin position="612"/>
        <end position="733"/>
    </location>
</feature>
<feature type="compositionally biased region" description="Polar residues" evidence="1">
    <location>
        <begin position="684"/>
        <end position="718"/>
    </location>
</feature>
<name>TTC16_MOUSE</name>
<dbReference type="EMBL" id="AK028040">
    <property type="protein sequence ID" value="BAC25714.1"/>
    <property type="molecule type" value="mRNA"/>
</dbReference>
<dbReference type="CCDS" id="CCDS71030.1"/>
<dbReference type="RefSeq" id="NP_001277493.1">
    <property type="nucleotide sequence ID" value="NM_001290564.1"/>
</dbReference>
<dbReference type="RefSeq" id="NP_001277495.1">
    <property type="nucleotide sequence ID" value="NM_001290566.1"/>
</dbReference>
<dbReference type="RefSeq" id="NP_001277496.1">
    <property type="nucleotide sequence ID" value="NM_001290567.1"/>
</dbReference>
<dbReference type="SMR" id="Q8C1F5"/>
<dbReference type="FunCoup" id="Q8C1F5">
    <property type="interactions" value="40"/>
</dbReference>
<dbReference type="STRING" id="10090.ENSMUSP00000124031"/>
<dbReference type="iPTMnet" id="Q8C1F5"/>
<dbReference type="PhosphoSitePlus" id="Q8C1F5"/>
<dbReference type="PaxDb" id="10090-ENSMUSP00000124031"/>
<dbReference type="ProteomicsDB" id="298005"/>
<dbReference type="DNASU" id="338348"/>
<dbReference type="GeneID" id="338348"/>
<dbReference type="KEGG" id="mmu:338348"/>
<dbReference type="AGR" id="MGI:2443048"/>
<dbReference type="CTD" id="158248"/>
<dbReference type="MGI" id="MGI:2443048">
    <property type="gene designation" value="Ttc16"/>
</dbReference>
<dbReference type="eggNOG" id="KOG1124">
    <property type="taxonomic scope" value="Eukaryota"/>
</dbReference>
<dbReference type="InParanoid" id="Q8C1F5"/>
<dbReference type="OrthoDB" id="1926212at2759"/>
<dbReference type="PhylomeDB" id="Q8C1F5"/>
<dbReference type="BioGRID-ORCS" id="338348">
    <property type="hits" value="1 hit in 79 CRISPR screens"/>
</dbReference>
<dbReference type="ChiTaRS" id="Ttc16">
    <property type="organism name" value="mouse"/>
</dbReference>
<dbReference type="PRO" id="PR:Q8C1F5"/>
<dbReference type="Proteomes" id="UP000000589">
    <property type="component" value="Unplaced"/>
</dbReference>
<dbReference type="RNAct" id="Q8C1F5">
    <property type="molecule type" value="protein"/>
</dbReference>
<dbReference type="Gene3D" id="1.25.40.10">
    <property type="entry name" value="Tetratricopeptide repeat domain"/>
    <property type="match status" value="5"/>
</dbReference>
<dbReference type="InterPro" id="IPR011990">
    <property type="entry name" value="TPR-like_helical_dom_sf"/>
</dbReference>
<dbReference type="InterPro" id="IPR019734">
    <property type="entry name" value="TPR_rpt"/>
</dbReference>
<dbReference type="PANTHER" id="PTHR45153">
    <property type="entry name" value="TETRATRICOPEPTIDE REPEAT PROTEIN 16"/>
    <property type="match status" value="1"/>
</dbReference>
<dbReference type="PANTHER" id="PTHR45153:SF1">
    <property type="entry name" value="TETRATRICOPEPTIDE REPEAT PROTEIN 16"/>
    <property type="match status" value="1"/>
</dbReference>
<dbReference type="Pfam" id="PF13181">
    <property type="entry name" value="TPR_8"/>
    <property type="match status" value="1"/>
</dbReference>
<dbReference type="SMART" id="SM00028">
    <property type="entry name" value="TPR"/>
    <property type="match status" value="9"/>
</dbReference>
<dbReference type="SUPFAM" id="SSF48452">
    <property type="entry name" value="TPR-like"/>
    <property type="match status" value="3"/>
</dbReference>
<dbReference type="PROSITE" id="PS50005">
    <property type="entry name" value="TPR"/>
    <property type="match status" value="7"/>
</dbReference>
<dbReference type="PROSITE" id="PS50293">
    <property type="entry name" value="TPR_REGION"/>
    <property type="match status" value="1"/>
</dbReference>